<organism>
    <name type="scientific">Piper cenocladum</name>
    <name type="common">Ant piper</name>
    <dbReference type="NCBI Taxonomy" id="398741"/>
    <lineage>
        <taxon>Eukaryota</taxon>
        <taxon>Viridiplantae</taxon>
        <taxon>Streptophyta</taxon>
        <taxon>Embryophyta</taxon>
        <taxon>Tracheophyta</taxon>
        <taxon>Spermatophyta</taxon>
        <taxon>Magnoliopsida</taxon>
        <taxon>Magnoliidae</taxon>
        <taxon>Piperales</taxon>
        <taxon>Piperaceae</taxon>
        <taxon>Piper</taxon>
    </lineage>
</organism>
<name>YCF15_PIPCE</name>
<gene>
    <name type="primary">ycf15-A</name>
</gene>
<gene>
    <name type="primary">ycf15-B</name>
</gene>
<comment type="subcellular location">
    <subcellularLocation>
        <location>Plastid</location>
        <location>Chloroplast</location>
    </subcellularLocation>
</comment>
<comment type="similarity">
    <text evidence="1">Belongs to the ycf15 family.</text>
</comment>
<comment type="caution">
    <text evidence="1">Could be the product of a pseudogene.</text>
</comment>
<sequence>METLVSSIFWTLTPWNNMLLLKHGRIEILDQNTMDRWYELPKQEFLNGEQPIQIFTTERYWILFRIGPERRGKARMPTDVYYLIHPTR</sequence>
<geneLocation type="chloroplast"/>
<accession>Q06GJ8</accession>
<evidence type="ECO:0000305" key="1"/>
<feature type="chain" id="PRO_0000299588" description="Putative uncharacterized protein ycf15">
    <location>
        <begin position="1"/>
        <end position="88"/>
    </location>
</feature>
<protein>
    <recommendedName>
        <fullName>Putative uncharacterized protein ycf15</fullName>
    </recommendedName>
</protein>
<dbReference type="EMBL" id="DQ887677">
    <property type="protein sequence ID" value="ABI14516.1"/>
    <property type="molecule type" value="Genomic_DNA"/>
</dbReference>
<dbReference type="EMBL" id="DQ887677">
    <property type="protein sequence ID" value="ABI14533.1"/>
    <property type="molecule type" value="Genomic_DNA"/>
</dbReference>
<dbReference type="GO" id="GO:0009507">
    <property type="term" value="C:chloroplast"/>
    <property type="evidence" value="ECO:0007669"/>
    <property type="project" value="UniProtKB-SubCell"/>
</dbReference>
<dbReference type="InterPro" id="IPR019645">
    <property type="entry name" value="Uncharacterised_Ycf15"/>
</dbReference>
<dbReference type="Pfam" id="PF10705">
    <property type="entry name" value="Ycf15"/>
    <property type="match status" value="1"/>
</dbReference>
<reference key="1">
    <citation type="journal article" date="2006" name="BMC Evol. Biol.">
        <title>Complete plastid genome sequences of Drimys, Liriodendron, and Piper: implications for the phylogenetic relationships of magnoliids.</title>
        <authorList>
            <person name="Cai Z."/>
            <person name="Penaflor C."/>
            <person name="Kuehl J.V."/>
            <person name="Leebens-Mack J."/>
            <person name="Carlson J.E."/>
            <person name="dePamphilis C.W."/>
            <person name="Boore J.L."/>
            <person name="Jansen R.K."/>
        </authorList>
    </citation>
    <scope>NUCLEOTIDE SEQUENCE [LARGE SCALE GENOMIC DNA]</scope>
</reference>
<keyword id="KW-0150">Chloroplast</keyword>
<keyword id="KW-0934">Plastid</keyword>
<proteinExistence type="uncertain"/>